<dbReference type="EC" id="3.2.1.17"/>
<dbReference type="STRING" id="9796.ENSECAP00000015931"/>
<dbReference type="PaxDb" id="9796-ENSECAP00000015931"/>
<dbReference type="InParanoid" id="P81710"/>
<dbReference type="Proteomes" id="UP000002281">
    <property type="component" value="Unplaced"/>
</dbReference>
<dbReference type="GO" id="GO:0003796">
    <property type="term" value="F:lysozyme activity"/>
    <property type="evidence" value="ECO:0007669"/>
    <property type="project" value="UniProtKB-EC"/>
</dbReference>
<dbReference type="GO" id="GO:0042742">
    <property type="term" value="P:defense response to bacterium"/>
    <property type="evidence" value="ECO:0007669"/>
    <property type="project" value="UniProtKB-KW"/>
</dbReference>
<dbReference type="GO" id="GO:0031640">
    <property type="term" value="P:killing of cells of another organism"/>
    <property type="evidence" value="ECO:0007669"/>
    <property type="project" value="UniProtKB-KW"/>
</dbReference>
<dbReference type="InterPro" id="IPR023346">
    <property type="entry name" value="Lysozyme-like_dom_sf"/>
</dbReference>
<dbReference type="SUPFAM" id="SSF53955">
    <property type="entry name" value="Lysozyme-like"/>
    <property type="match status" value="1"/>
</dbReference>
<protein>
    <recommendedName>
        <fullName>Lysozyme C, spleen isozyme</fullName>
        <ecNumber>3.2.1.17</ecNumber>
    </recommendedName>
    <alternativeName>
        <fullName>1,4-beta-N-acetylmuramidase C</fullName>
    </alternativeName>
</protein>
<accession>P81710</accession>
<proteinExistence type="evidence at protein level"/>
<sequence>KVFERXELARTLKRLGLDGFRGVSLPNXVXLAR</sequence>
<feature type="chain" id="PRO_0000208852" description="Lysozyme C, spleen isozyme">
    <location>
        <begin position="1"/>
        <end position="33" status="greater than"/>
    </location>
</feature>
<feature type="non-terminal residue">
    <location>
        <position position="33"/>
    </location>
</feature>
<name>LYSC2_HORSE</name>
<organism>
    <name type="scientific">Equus caballus</name>
    <name type="common">Horse</name>
    <dbReference type="NCBI Taxonomy" id="9796"/>
    <lineage>
        <taxon>Eukaryota</taxon>
        <taxon>Metazoa</taxon>
        <taxon>Chordata</taxon>
        <taxon>Craniata</taxon>
        <taxon>Vertebrata</taxon>
        <taxon>Euteleostomi</taxon>
        <taxon>Mammalia</taxon>
        <taxon>Eutheria</taxon>
        <taxon>Laurasiatheria</taxon>
        <taxon>Perissodactyla</taxon>
        <taxon>Equidae</taxon>
        <taxon>Equus</taxon>
    </lineage>
</organism>
<keyword id="KW-0929">Antimicrobial</keyword>
<keyword id="KW-0081">Bacteriolytic enzyme</keyword>
<keyword id="KW-0903">Direct protein sequencing</keyword>
<keyword id="KW-0326">Glycosidase</keyword>
<keyword id="KW-0378">Hydrolase</keyword>
<keyword id="KW-1185">Reference proteome</keyword>
<reference key="1">
    <citation type="journal article" date="1994" name="Arch. Biochem. Biophys.">
        <title>Sequences of two highly divergent canine type c lysozymes: implications for the evolutionary origins of the lysozyme/alpha-lactalbumin superfamily.</title>
        <authorList>
            <person name="Grobler J.A."/>
            <person name="Rao K.R."/>
            <person name="Pervaiz S."/>
            <person name="Brew K."/>
        </authorList>
    </citation>
    <scope>PROTEIN SEQUENCE</scope>
    <source>
        <tissue>Spleen</tissue>
    </source>
</reference>
<comment type="function">
    <text evidence="1">Lysozymes have primarily a bacteriolytic function; those in tissues and body fluids are associated with the monocyte-macrophage system and enhance the activity of immunoagents.</text>
</comment>
<comment type="catalytic activity">
    <reaction>
        <text>Hydrolysis of (1-&gt;4)-beta-linkages between N-acetylmuramic acid and N-acetyl-D-glucosamine residues in a peptidoglycan and between N-acetyl-D-glucosamine residues in chitodextrins.</text>
        <dbReference type="EC" id="3.2.1.17"/>
    </reaction>
</comment>
<comment type="subunit">
    <text evidence="1">Monomer.</text>
</comment>
<comment type="miscellaneous">
    <text evidence="1">Lysozyme C is capable of both hydrolysis and transglycosylation; it also shows a slight esterase activity. It acts rapidly on both peptide-substituted and unsubstituted peptidoglycan, and slowly on chitin oligosaccharides (By similarity).</text>
</comment>
<comment type="similarity">
    <text evidence="2">Belongs to the glycosyl hydrolase 22 family.</text>
</comment>
<evidence type="ECO:0000250" key="1"/>
<evidence type="ECO:0000305" key="2"/>